<keyword id="KW-0165">Cleavage on pair of basic residues</keyword>
<keyword id="KW-1015">Disulfide bond</keyword>
<keyword id="KW-0675">Receptor</keyword>
<keyword id="KW-1185">Reference proteome</keyword>
<keyword id="KW-0964">Secreted</keyword>
<keyword id="KW-0732">Signal</keyword>
<sequence length="125" mass="14361">MGFWKFPPFLVLSILVLYQAGMFHAAPFRSVFDGRFDPATLDEEESRLLLAAMVNDYEQMRARESEKAQKTEGSRIQKRACNTATCMTHRLAGWLSRSGSMVRSNLLPTKMGFKIFSGPRKNFWF</sequence>
<organism>
    <name type="scientific">Capra hircus</name>
    <name type="common">Goat</name>
    <dbReference type="NCBI Taxonomy" id="9925"/>
    <lineage>
        <taxon>Eukaryota</taxon>
        <taxon>Metazoa</taxon>
        <taxon>Chordata</taxon>
        <taxon>Craniata</taxon>
        <taxon>Vertebrata</taxon>
        <taxon>Euteleostomi</taxon>
        <taxon>Mammalia</taxon>
        <taxon>Eutheria</taxon>
        <taxon>Laurasiatheria</taxon>
        <taxon>Artiodactyla</taxon>
        <taxon>Ruminantia</taxon>
        <taxon>Pecora</taxon>
        <taxon>Bovidae</taxon>
        <taxon>Caprinae</taxon>
        <taxon>Capra</taxon>
    </lineage>
</organism>
<gene>
    <name type="primary">CRSP1</name>
</gene>
<reference key="1">
    <citation type="submission" date="2007-10" db="EMBL/GenBank/DDBJ databases">
        <title>Identification and biological activity of ovine and caprine calcitonin receptor-Sti.</title>
        <authorList>
            <person name="Charles C.J."/>
            <person name="Katafuchi T."/>
            <person name="Yandle T.G."/>
            <person name="Minamino N."/>
        </authorList>
    </citation>
    <scope>NUCLEOTIDE SEQUENCE [MRNA]</scope>
</reference>
<feature type="signal peptide" evidence="2">
    <location>
        <begin position="1"/>
        <end position="25"/>
    </location>
</feature>
<feature type="propeptide" id="PRO_0000353074" evidence="1">
    <location>
        <begin position="26"/>
        <end position="77"/>
    </location>
</feature>
<feature type="peptide" id="PRO_0000353075" description="Calcitonin receptor-stimulating peptide 1">
    <location>
        <begin position="80"/>
        <end position="125"/>
    </location>
</feature>
<feature type="disulfide bond" evidence="1">
    <location>
        <begin position="81"/>
        <end position="86"/>
    </location>
</feature>
<name>CRSP1_CAPHI</name>
<comment type="function">
    <text evidence="1">Stimulates cAMP production in porcine kidney cell line LLC-PK1 via the calcitonin receptor (CT) but not via the CT-like (CL) receptor.</text>
</comment>
<comment type="subcellular location">
    <subcellularLocation>
        <location evidence="1">Secreted</location>
    </subcellularLocation>
</comment>
<comment type="similarity">
    <text evidence="3">Belongs to the calcitonin family.</text>
</comment>
<dbReference type="EMBL" id="AB364646">
    <property type="protein sequence ID" value="BAG50395.1"/>
    <property type="molecule type" value="mRNA"/>
</dbReference>
<dbReference type="RefSeq" id="NP_001272563.1">
    <property type="nucleotide sequence ID" value="NM_001285634.1"/>
</dbReference>
<dbReference type="SMR" id="B3IWF7"/>
<dbReference type="STRING" id="9925.ENSCHIP00000015856"/>
<dbReference type="Ensembl" id="ENSCHIT00000023661.1">
    <property type="protein sequence ID" value="ENSCHIP00000015856.1"/>
    <property type="gene ID" value="ENSCHIG00000016334.1"/>
</dbReference>
<dbReference type="Ensembl" id="ENSCHIT00020023912">
    <property type="protein sequence ID" value="ENSCHIP00020017681"/>
    <property type="gene ID" value="ENSCHIG00020011584"/>
</dbReference>
<dbReference type="GeneID" id="100861290"/>
<dbReference type="KEGG" id="chx:100861290"/>
<dbReference type="CTD" id="100861290"/>
<dbReference type="GeneTree" id="ENSGT00940000166205"/>
<dbReference type="OMA" id="QAFGRKK"/>
<dbReference type="OrthoDB" id="9929923at2759"/>
<dbReference type="Proteomes" id="UP000291000">
    <property type="component" value="Chromosome 15"/>
</dbReference>
<dbReference type="Proteomes" id="UP000694566">
    <property type="component" value="Unplaced"/>
</dbReference>
<dbReference type="Bgee" id="ENSCHIG00000016334">
    <property type="expression patterns" value="Expressed in ovary and 2 other cell types or tissues"/>
</dbReference>
<dbReference type="GO" id="GO:0005615">
    <property type="term" value="C:extracellular space"/>
    <property type="evidence" value="ECO:0007669"/>
    <property type="project" value="TreeGrafter"/>
</dbReference>
<dbReference type="GO" id="GO:0031716">
    <property type="term" value="F:calcitonin receptor binding"/>
    <property type="evidence" value="ECO:0007669"/>
    <property type="project" value="TreeGrafter"/>
</dbReference>
<dbReference type="GO" id="GO:0005179">
    <property type="term" value="F:hormone activity"/>
    <property type="evidence" value="ECO:0007669"/>
    <property type="project" value="InterPro"/>
</dbReference>
<dbReference type="GO" id="GO:0007189">
    <property type="term" value="P:adenylate cyclase-activating G protein-coupled receptor signaling pathway"/>
    <property type="evidence" value="ECO:0007669"/>
    <property type="project" value="TreeGrafter"/>
</dbReference>
<dbReference type="GO" id="GO:0051480">
    <property type="term" value="P:regulation of cytosolic calcium ion concentration"/>
    <property type="evidence" value="ECO:0007669"/>
    <property type="project" value="TreeGrafter"/>
</dbReference>
<dbReference type="Gene3D" id="6.10.250.2190">
    <property type="match status" value="1"/>
</dbReference>
<dbReference type="InterPro" id="IPR021117">
    <property type="entry name" value="Calcitonin-like"/>
</dbReference>
<dbReference type="InterPro" id="IPR021116">
    <property type="entry name" value="Calcitonin/adrenomedullin"/>
</dbReference>
<dbReference type="InterPro" id="IPR018360">
    <property type="entry name" value="Calcitonin_CS"/>
</dbReference>
<dbReference type="InterPro" id="IPR015476">
    <property type="entry name" value="Calcitonin_gene-rel_peptide"/>
</dbReference>
<dbReference type="InterPro" id="IPR001693">
    <property type="entry name" value="Calcitonin_peptide-like"/>
</dbReference>
<dbReference type="PANTHER" id="PTHR10505:SF13">
    <property type="entry name" value="CALCITONIN GENE-RELATED PEPTIDE 1"/>
    <property type="match status" value="1"/>
</dbReference>
<dbReference type="PANTHER" id="PTHR10505">
    <property type="entry name" value="CALCITONIN-RELATED"/>
    <property type="match status" value="1"/>
</dbReference>
<dbReference type="Pfam" id="PF00214">
    <property type="entry name" value="Calc_CGRP_IAPP"/>
    <property type="match status" value="1"/>
</dbReference>
<dbReference type="PRINTS" id="PR00817">
    <property type="entry name" value="CALCITONINB"/>
</dbReference>
<dbReference type="SMART" id="SM00113">
    <property type="entry name" value="CALCITONIN"/>
    <property type="match status" value="1"/>
</dbReference>
<dbReference type="PROSITE" id="PS00258">
    <property type="entry name" value="CALCITONIN"/>
    <property type="match status" value="1"/>
</dbReference>
<proteinExistence type="evidence at transcript level"/>
<evidence type="ECO:0000250" key="1"/>
<evidence type="ECO:0000255" key="2"/>
<evidence type="ECO:0000305" key="3"/>
<accession>B3IWF7</accession>
<protein>
    <recommendedName>
        <fullName>Calcitonin receptor-stimulating peptide 1</fullName>
        <shortName>CRSP-1</shortName>
    </recommendedName>
</protein>